<keyword id="KW-0227">DNA damage</keyword>
<keyword id="KW-0233">DNA recombination</keyword>
<keyword id="KW-0234">DNA repair</keyword>
<keyword id="KW-0479">Metal-binding</keyword>
<keyword id="KW-0862">Zinc</keyword>
<keyword id="KW-0863">Zinc-finger</keyword>
<feature type="chain" id="PRO_1000089707" description="Recombination protein RecR">
    <location>
        <begin position="1"/>
        <end position="198"/>
    </location>
</feature>
<feature type="domain" description="Toprim" evidence="1">
    <location>
        <begin position="80"/>
        <end position="175"/>
    </location>
</feature>
<feature type="zinc finger region" description="C4-type" evidence="1">
    <location>
        <begin position="57"/>
        <end position="72"/>
    </location>
</feature>
<dbReference type="EMBL" id="CP001025">
    <property type="protein sequence ID" value="ACB64221.1"/>
    <property type="molecule type" value="Genomic_DNA"/>
</dbReference>
<dbReference type="RefSeq" id="WP_006755697.1">
    <property type="nucleotide sequence ID" value="NC_010551.1"/>
</dbReference>
<dbReference type="SMR" id="B1YRE7"/>
<dbReference type="GeneID" id="93086030"/>
<dbReference type="KEGG" id="bac:BamMC406_1736"/>
<dbReference type="HOGENOM" id="CLU_060739_1_2_4"/>
<dbReference type="OrthoDB" id="9802672at2"/>
<dbReference type="Proteomes" id="UP000001680">
    <property type="component" value="Chromosome 1"/>
</dbReference>
<dbReference type="GO" id="GO:0003677">
    <property type="term" value="F:DNA binding"/>
    <property type="evidence" value="ECO:0007669"/>
    <property type="project" value="UniProtKB-UniRule"/>
</dbReference>
<dbReference type="GO" id="GO:0008270">
    <property type="term" value="F:zinc ion binding"/>
    <property type="evidence" value="ECO:0007669"/>
    <property type="project" value="UniProtKB-KW"/>
</dbReference>
<dbReference type="GO" id="GO:0006310">
    <property type="term" value="P:DNA recombination"/>
    <property type="evidence" value="ECO:0007669"/>
    <property type="project" value="UniProtKB-UniRule"/>
</dbReference>
<dbReference type="GO" id="GO:0006281">
    <property type="term" value="P:DNA repair"/>
    <property type="evidence" value="ECO:0007669"/>
    <property type="project" value="UniProtKB-UniRule"/>
</dbReference>
<dbReference type="CDD" id="cd01025">
    <property type="entry name" value="TOPRIM_recR"/>
    <property type="match status" value="1"/>
</dbReference>
<dbReference type="Gene3D" id="3.40.1360.10">
    <property type="match status" value="1"/>
</dbReference>
<dbReference type="Gene3D" id="6.10.250.240">
    <property type="match status" value="1"/>
</dbReference>
<dbReference type="Gene3D" id="1.10.8.420">
    <property type="entry name" value="RecR Domain 1"/>
    <property type="match status" value="1"/>
</dbReference>
<dbReference type="HAMAP" id="MF_00017">
    <property type="entry name" value="RecR"/>
    <property type="match status" value="1"/>
</dbReference>
<dbReference type="InterPro" id="IPR000093">
    <property type="entry name" value="DNA_Rcmb_RecR"/>
</dbReference>
<dbReference type="InterPro" id="IPR023627">
    <property type="entry name" value="Rcmb_RecR"/>
</dbReference>
<dbReference type="InterPro" id="IPR015967">
    <property type="entry name" value="Rcmb_RecR_Znf"/>
</dbReference>
<dbReference type="InterPro" id="IPR006171">
    <property type="entry name" value="TOPRIM_dom"/>
</dbReference>
<dbReference type="InterPro" id="IPR034137">
    <property type="entry name" value="TOPRIM_RecR"/>
</dbReference>
<dbReference type="NCBIfam" id="TIGR00615">
    <property type="entry name" value="recR"/>
    <property type="match status" value="1"/>
</dbReference>
<dbReference type="PANTHER" id="PTHR30446">
    <property type="entry name" value="RECOMBINATION PROTEIN RECR"/>
    <property type="match status" value="1"/>
</dbReference>
<dbReference type="PANTHER" id="PTHR30446:SF0">
    <property type="entry name" value="RECOMBINATION PROTEIN RECR"/>
    <property type="match status" value="1"/>
</dbReference>
<dbReference type="Pfam" id="PF21175">
    <property type="entry name" value="RecR_C"/>
    <property type="match status" value="1"/>
</dbReference>
<dbReference type="Pfam" id="PF21176">
    <property type="entry name" value="RecR_HhH"/>
    <property type="match status" value="1"/>
</dbReference>
<dbReference type="Pfam" id="PF02132">
    <property type="entry name" value="RecR_ZnF"/>
    <property type="match status" value="1"/>
</dbReference>
<dbReference type="Pfam" id="PF13662">
    <property type="entry name" value="Toprim_4"/>
    <property type="match status" value="1"/>
</dbReference>
<dbReference type="SMART" id="SM00493">
    <property type="entry name" value="TOPRIM"/>
    <property type="match status" value="1"/>
</dbReference>
<dbReference type="SUPFAM" id="SSF111304">
    <property type="entry name" value="Recombination protein RecR"/>
    <property type="match status" value="1"/>
</dbReference>
<dbReference type="PROSITE" id="PS01300">
    <property type="entry name" value="RECR"/>
    <property type="match status" value="1"/>
</dbReference>
<dbReference type="PROSITE" id="PS50880">
    <property type="entry name" value="TOPRIM"/>
    <property type="match status" value="1"/>
</dbReference>
<evidence type="ECO:0000255" key="1">
    <source>
        <dbReference type="HAMAP-Rule" id="MF_00017"/>
    </source>
</evidence>
<gene>
    <name evidence="1" type="primary">recR</name>
    <name type="ordered locus">BamMC406_1736</name>
</gene>
<accession>B1YRE7</accession>
<name>RECR_BURA4</name>
<reference key="1">
    <citation type="submission" date="2008-04" db="EMBL/GenBank/DDBJ databases">
        <title>Complete sequence of chromosome 1 of Burkholderia ambifaria MC40-6.</title>
        <authorList>
            <person name="Copeland A."/>
            <person name="Lucas S."/>
            <person name="Lapidus A."/>
            <person name="Glavina del Rio T."/>
            <person name="Dalin E."/>
            <person name="Tice H."/>
            <person name="Pitluck S."/>
            <person name="Chain P."/>
            <person name="Malfatti S."/>
            <person name="Shin M."/>
            <person name="Vergez L."/>
            <person name="Lang D."/>
            <person name="Schmutz J."/>
            <person name="Larimer F."/>
            <person name="Land M."/>
            <person name="Hauser L."/>
            <person name="Kyrpides N."/>
            <person name="Lykidis A."/>
            <person name="Ramette A."/>
            <person name="Konstantinidis K."/>
            <person name="Tiedje J."/>
            <person name="Richardson P."/>
        </authorList>
    </citation>
    <scope>NUCLEOTIDE SEQUENCE [LARGE SCALE GENOMIC DNA]</scope>
    <source>
        <strain>MC40-6</strain>
    </source>
</reference>
<organism>
    <name type="scientific">Burkholderia ambifaria (strain MC40-6)</name>
    <dbReference type="NCBI Taxonomy" id="398577"/>
    <lineage>
        <taxon>Bacteria</taxon>
        <taxon>Pseudomonadati</taxon>
        <taxon>Pseudomonadota</taxon>
        <taxon>Betaproteobacteria</taxon>
        <taxon>Burkholderiales</taxon>
        <taxon>Burkholderiaceae</taxon>
        <taxon>Burkholderia</taxon>
        <taxon>Burkholderia cepacia complex</taxon>
    </lineage>
</organism>
<protein>
    <recommendedName>
        <fullName evidence="1">Recombination protein RecR</fullName>
    </recommendedName>
</protein>
<comment type="function">
    <text evidence="1">May play a role in DNA repair. It seems to be involved in an RecBC-independent recombinational process of DNA repair. It may act with RecF and RecO.</text>
</comment>
<comment type="similarity">
    <text evidence="1">Belongs to the RecR family.</text>
</comment>
<proteinExistence type="inferred from homology"/>
<sequence length="198" mass="21899">MKQPSALSALVEALRVLPGVGPKSAQRMAYHLMQHDREGAERLGRSLLFATEHLQHCEKCNTFTEAQICEVCSDDERDPTLLCVVETPADQIMLEQTMTYRGLYFVLMGRLSPLDGIGPKEIHFDRLVRRASDGVVKEVVLATNFTNEGEATAHYLGQTLKARGLAVTRLARGVPVGGELEYVDAGTIARAMLDRRTM</sequence>